<proteinExistence type="predicted"/>
<sequence length="211" mass="24214">MIFMFHSGAMELLKIAEKLYDKDSEKAVEVYDKAIKKAERIYDDYAKAVILSNIAKSLYSRGLTNKVIEVYNKAIKIAEESSKRDVILSKIIENLCSNRLIDKALEVVNKISDDSSKAIALSEIAKAQYNIGMHDEALKNYDKAIFITEGVFDDEIKSSILFEISRDFYNYGLVDKAFEVIGKIPYSKYRFRLLDKMAEDLHKNIKYIHGE</sequence>
<accession>Q60278</accession>
<protein>
    <recommendedName>
        <fullName>Uncharacterized protein MJECL18</fullName>
    </recommendedName>
</protein>
<dbReference type="EMBL" id="L77118">
    <property type="protein sequence ID" value="AAC37089.1"/>
    <property type="molecule type" value="Genomic_DNA"/>
</dbReference>
<dbReference type="PIR" id="A64512">
    <property type="entry name" value="A64512"/>
</dbReference>
<dbReference type="SMR" id="Q60278"/>
<dbReference type="PaxDb" id="243232-MJ_ECL18"/>
<dbReference type="EnsemblBacteria" id="AAC37089">
    <property type="protein sequence ID" value="AAC37089"/>
    <property type="gene ID" value="MJ_ECL18"/>
</dbReference>
<dbReference type="KEGG" id="mja:MJ_ECL18"/>
<dbReference type="eggNOG" id="arCOG03827">
    <property type="taxonomic scope" value="Archaea"/>
</dbReference>
<dbReference type="HOGENOM" id="CLU_1302633_0_0_2"/>
<dbReference type="InParanoid" id="Q60278"/>
<dbReference type="PhylomeDB" id="Q60278"/>
<dbReference type="Proteomes" id="UP000000805">
    <property type="component" value="Plasmid pDSM2661_1"/>
</dbReference>
<dbReference type="Gene3D" id="1.25.40.10">
    <property type="entry name" value="Tetratricopeptide repeat domain"/>
    <property type="match status" value="2"/>
</dbReference>
<dbReference type="InterPro" id="IPR011990">
    <property type="entry name" value="TPR-like_helical_dom_sf"/>
</dbReference>
<dbReference type="InterPro" id="IPR019734">
    <property type="entry name" value="TPR_rpt"/>
</dbReference>
<dbReference type="SMART" id="SM00028">
    <property type="entry name" value="TPR"/>
    <property type="match status" value="3"/>
</dbReference>
<dbReference type="SUPFAM" id="SSF48452">
    <property type="entry name" value="TPR-like"/>
    <property type="match status" value="1"/>
</dbReference>
<feature type="chain" id="PRO_0000107506" description="Uncharacterized protein MJECL18">
    <location>
        <begin position="1"/>
        <end position="211"/>
    </location>
</feature>
<keyword id="KW-0614">Plasmid</keyword>
<keyword id="KW-1185">Reference proteome</keyword>
<gene>
    <name type="ordered locus">MJECL18</name>
</gene>
<geneLocation type="plasmid">
    <name>large ECE</name>
</geneLocation>
<organism>
    <name type="scientific">Methanocaldococcus jannaschii (strain ATCC 43067 / DSM 2661 / JAL-1 / JCM 10045 / NBRC 100440)</name>
    <name type="common">Methanococcus jannaschii</name>
    <dbReference type="NCBI Taxonomy" id="243232"/>
    <lineage>
        <taxon>Archaea</taxon>
        <taxon>Methanobacteriati</taxon>
        <taxon>Methanobacteriota</taxon>
        <taxon>Methanomada group</taxon>
        <taxon>Methanococci</taxon>
        <taxon>Methanococcales</taxon>
        <taxon>Methanocaldococcaceae</taxon>
        <taxon>Methanocaldococcus</taxon>
    </lineage>
</organism>
<reference key="1">
    <citation type="journal article" date="1996" name="Science">
        <title>Complete genome sequence of the methanogenic archaeon, Methanococcus jannaschii.</title>
        <authorList>
            <person name="Bult C.J."/>
            <person name="White O."/>
            <person name="Olsen G.J."/>
            <person name="Zhou L."/>
            <person name="Fleischmann R.D."/>
            <person name="Sutton G.G."/>
            <person name="Blake J.A."/>
            <person name="FitzGerald L.M."/>
            <person name="Clayton R.A."/>
            <person name="Gocayne J.D."/>
            <person name="Kerlavage A.R."/>
            <person name="Dougherty B.A."/>
            <person name="Tomb J.-F."/>
            <person name="Adams M.D."/>
            <person name="Reich C.I."/>
            <person name="Overbeek R."/>
            <person name="Kirkness E.F."/>
            <person name="Weinstock K.G."/>
            <person name="Merrick J.M."/>
            <person name="Glodek A."/>
            <person name="Scott J.L."/>
            <person name="Geoghagen N.S.M."/>
            <person name="Weidman J.F."/>
            <person name="Fuhrmann J.L."/>
            <person name="Nguyen D."/>
            <person name="Utterback T.R."/>
            <person name="Kelley J.M."/>
            <person name="Peterson J.D."/>
            <person name="Sadow P.W."/>
            <person name="Hanna M.C."/>
            <person name="Cotton M.D."/>
            <person name="Roberts K.M."/>
            <person name="Hurst M.A."/>
            <person name="Kaine B.P."/>
            <person name="Borodovsky M."/>
            <person name="Klenk H.-P."/>
            <person name="Fraser C.M."/>
            <person name="Smith H.O."/>
            <person name="Woese C.R."/>
            <person name="Venter J.C."/>
        </authorList>
    </citation>
    <scope>NUCLEOTIDE SEQUENCE [LARGE SCALE GENOMIC DNA]</scope>
    <source>
        <strain>ATCC 43067 / DSM 2661 / JAL-1 / JCM 10045 / NBRC 100440</strain>
    </source>
</reference>
<name>Y3518_METJA</name>